<proteinExistence type="inferred from homology"/>
<gene>
    <name evidence="1" type="primary">potA</name>
    <name type="ordered locus">MG042</name>
</gene>
<organism>
    <name type="scientific">Mycoplasma genitalium (strain ATCC 33530 / DSM 19775 / NCTC 10195 / G37)</name>
    <name type="common">Mycoplasmoides genitalium</name>
    <dbReference type="NCBI Taxonomy" id="243273"/>
    <lineage>
        <taxon>Bacteria</taxon>
        <taxon>Bacillati</taxon>
        <taxon>Mycoplasmatota</taxon>
        <taxon>Mycoplasmoidales</taxon>
        <taxon>Mycoplasmoidaceae</taxon>
        <taxon>Mycoplasmoides</taxon>
    </lineage>
</organism>
<protein>
    <recommendedName>
        <fullName evidence="1">Spermidine/putrescine import ATP-binding protein PotA</fullName>
        <ecNumber evidence="1">7.6.2.11</ecNumber>
    </recommendedName>
</protein>
<name>POTA_MYCGE</name>
<sequence>MNEHSLIEIEGLNKTFDDGYVSIRDISLNIKKGEFITILGPSGCGKTTLLRLLAGFEDPTYGKIKVNGIDIKDMAIHKRPFATVFQDYALFSHLTVYKNIAYGLKVMWTKLDEIPKLVSDYQKQLALKHLKLERKIEQLQKNNSNAQRIKKLKEKLQKLLEINKQKVIEFENKEKLRREDIYKNLEQLTKEWDLLSQKKLKEVEQQKQAIDKSFEKVENKYKKDPWFFQHSEIRLKQYQKKKTELKADIKATKNKEQIQKLTKELQTLKQKYANKKAIDKEYDKLVVAYNKKDYWTSYWETYTLQQKEAFEKRYLSRKLTKAEQNKKVSDVIEMVGLKGKEDRLPDELSGGMKQRVALARSLVVEPEILLLDEPLSALDAKVRKNLQKELQQIHKKSGLTFILVTHDQEEALVLSDRIVVMNEGNILQVGNPVDIYDSPKTEWIANFIGQANIFKGTYLGEKKIQLQSGEIIQTDVDNNYVVGKQYKILIRPEDFDLVPENKGFFNVRVIDKNYKGLLWKITTQLKDNTIVDLESVNEVDVNKTFGVLFDPIDVHLMEV</sequence>
<dbReference type="EC" id="7.6.2.11" evidence="1"/>
<dbReference type="EMBL" id="L43967">
    <property type="protein sequence ID" value="AAC71258.1"/>
    <property type="molecule type" value="Genomic_DNA"/>
</dbReference>
<dbReference type="RefSeq" id="WP_010869303.1">
    <property type="nucleotide sequence ID" value="NC_000908.2"/>
</dbReference>
<dbReference type="FunCoup" id="P47288">
    <property type="interactions" value="181"/>
</dbReference>
<dbReference type="STRING" id="243273.MG_042"/>
<dbReference type="GeneID" id="88282157"/>
<dbReference type="KEGG" id="mge:MG_042"/>
<dbReference type="eggNOG" id="COG3842">
    <property type="taxonomic scope" value="Bacteria"/>
</dbReference>
<dbReference type="HOGENOM" id="CLU_000604_1_1_14"/>
<dbReference type="InParanoid" id="P47288"/>
<dbReference type="OrthoDB" id="9802264at2"/>
<dbReference type="BioCyc" id="MGEN243273:G1GJ2-42-MONOMER"/>
<dbReference type="Proteomes" id="UP000000807">
    <property type="component" value="Chromosome"/>
</dbReference>
<dbReference type="GO" id="GO:0005886">
    <property type="term" value="C:plasma membrane"/>
    <property type="evidence" value="ECO:0007669"/>
    <property type="project" value="UniProtKB-SubCell"/>
</dbReference>
<dbReference type="GO" id="GO:0015417">
    <property type="term" value="F:ABC-type polyamine transporter activity"/>
    <property type="evidence" value="ECO:0007669"/>
    <property type="project" value="UniProtKB-EC"/>
</dbReference>
<dbReference type="GO" id="GO:0005524">
    <property type="term" value="F:ATP binding"/>
    <property type="evidence" value="ECO:0007669"/>
    <property type="project" value="UniProtKB-KW"/>
</dbReference>
<dbReference type="GO" id="GO:0016887">
    <property type="term" value="F:ATP hydrolysis activity"/>
    <property type="evidence" value="ECO:0007669"/>
    <property type="project" value="InterPro"/>
</dbReference>
<dbReference type="Gene3D" id="2.40.50.100">
    <property type="match status" value="1"/>
</dbReference>
<dbReference type="Gene3D" id="3.40.50.300">
    <property type="entry name" value="P-loop containing nucleotide triphosphate hydrolases"/>
    <property type="match status" value="2"/>
</dbReference>
<dbReference type="InterPro" id="IPR003593">
    <property type="entry name" value="AAA+_ATPase"/>
</dbReference>
<dbReference type="InterPro" id="IPR050093">
    <property type="entry name" value="ABC_SmlMolc_Importer"/>
</dbReference>
<dbReference type="InterPro" id="IPR003439">
    <property type="entry name" value="ABC_transporter-like_ATP-bd"/>
</dbReference>
<dbReference type="InterPro" id="IPR017871">
    <property type="entry name" value="ABC_transporter-like_CS"/>
</dbReference>
<dbReference type="InterPro" id="IPR008995">
    <property type="entry name" value="Mo/tungstate-bd_C_term_dom"/>
</dbReference>
<dbReference type="InterPro" id="IPR027417">
    <property type="entry name" value="P-loop_NTPase"/>
</dbReference>
<dbReference type="PANTHER" id="PTHR42781">
    <property type="entry name" value="SPERMIDINE/PUTRESCINE IMPORT ATP-BINDING PROTEIN POTA"/>
    <property type="match status" value="1"/>
</dbReference>
<dbReference type="PANTHER" id="PTHR42781:SF4">
    <property type="entry name" value="SPERMIDINE_PUTRESCINE IMPORT ATP-BINDING PROTEIN POTA"/>
    <property type="match status" value="1"/>
</dbReference>
<dbReference type="Pfam" id="PF00005">
    <property type="entry name" value="ABC_tran"/>
    <property type="match status" value="2"/>
</dbReference>
<dbReference type="SMART" id="SM00382">
    <property type="entry name" value="AAA"/>
    <property type="match status" value="1"/>
</dbReference>
<dbReference type="SUPFAM" id="SSF50331">
    <property type="entry name" value="MOP-like"/>
    <property type="match status" value="1"/>
</dbReference>
<dbReference type="SUPFAM" id="SSF52540">
    <property type="entry name" value="P-loop containing nucleoside triphosphate hydrolases"/>
    <property type="match status" value="1"/>
</dbReference>
<dbReference type="PROSITE" id="PS00211">
    <property type="entry name" value="ABC_TRANSPORTER_1"/>
    <property type="match status" value="1"/>
</dbReference>
<dbReference type="PROSITE" id="PS50893">
    <property type="entry name" value="ABC_TRANSPORTER_2"/>
    <property type="match status" value="1"/>
</dbReference>
<dbReference type="PROSITE" id="PS51305">
    <property type="entry name" value="POTA"/>
    <property type="match status" value="1"/>
</dbReference>
<feature type="chain" id="PRO_0000092750" description="Spermidine/putrescine import ATP-binding protein PotA">
    <location>
        <begin position="1"/>
        <end position="559"/>
    </location>
</feature>
<feature type="domain" description="ABC transporter" evidence="1">
    <location>
        <begin position="7"/>
        <end position="448"/>
    </location>
</feature>
<feature type="region of interest" description="Insert">
    <location>
        <begin position="108"/>
        <end position="317"/>
    </location>
</feature>
<feature type="binding site" evidence="1">
    <location>
        <begin position="40"/>
        <end position="47"/>
    </location>
    <ligand>
        <name>ATP</name>
        <dbReference type="ChEBI" id="CHEBI:30616"/>
    </ligand>
</feature>
<keyword id="KW-0067">ATP-binding</keyword>
<keyword id="KW-1003">Cell membrane</keyword>
<keyword id="KW-0472">Membrane</keyword>
<keyword id="KW-0547">Nucleotide-binding</keyword>
<keyword id="KW-1185">Reference proteome</keyword>
<keyword id="KW-1278">Translocase</keyword>
<keyword id="KW-0813">Transport</keyword>
<evidence type="ECO:0000255" key="1">
    <source>
        <dbReference type="HAMAP-Rule" id="MF_01726"/>
    </source>
</evidence>
<comment type="function">
    <text evidence="1">Part of the ABC transporter complex PotABCD involved in spermidine/putrescine import. Responsible for energy coupling to the transport system.</text>
</comment>
<comment type="catalytic activity">
    <reaction evidence="1">
        <text>ATP + H2O + polyamine-[polyamine-binding protein]Side 1 = ADP + phosphate + polyamineSide 2 + [polyamine-binding protein]Side 1.</text>
        <dbReference type="EC" id="7.6.2.11"/>
    </reaction>
</comment>
<comment type="subunit">
    <text evidence="1">The complex is composed of two ATP-binding proteins (PotA), two transmembrane proteins (PotB and PotC) and a solute-binding protein (PotD).</text>
</comment>
<comment type="subcellular location">
    <subcellularLocation>
        <location evidence="1">Cell membrane</location>
        <topology evidence="1">Peripheral membrane protein</topology>
    </subcellularLocation>
</comment>
<comment type="similarity">
    <text evidence="1">Belongs to the ABC transporter superfamily. Spermidine/putrescine importer (TC 3.A.1.11.1) family.</text>
</comment>
<reference key="1">
    <citation type="journal article" date="1995" name="Science">
        <title>The minimal gene complement of Mycoplasma genitalium.</title>
        <authorList>
            <person name="Fraser C.M."/>
            <person name="Gocayne J.D."/>
            <person name="White O."/>
            <person name="Adams M.D."/>
            <person name="Clayton R.A."/>
            <person name="Fleischmann R.D."/>
            <person name="Bult C.J."/>
            <person name="Kerlavage A.R."/>
            <person name="Sutton G.G."/>
            <person name="Kelley J.M."/>
            <person name="Fritchman J.L."/>
            <person name="Weidman J.F."/>
            <person name="Small K.V."/>
            <person name="Sandusky M."/>
            <person name="Fuhrmann J.L."/>
            <person name="Nguyen D.T."/>
            <person name="Utterback T.R."/>
            <person name="Saudek D.M."/>
            <person name="Phillips C.A."/>
            <person name="Merrick J.M."/>
            <person name="Tomb J.-F."/>
            <person name="Dougherty B.A."/>
            <person name="Bott K.F."/>
            <person name="Hu P.-C."/>
            <person name="Lucier T.S."/>
            <person name="Peterson S.N."/>
            <person name="Smith H.O."/>
            <person name="Hutchison C.A. III"/>
            <person name="Venter J.C."/>
        </authorList>
    </citation>
    <scope>NUCLEOTIDE SEQUENCE [LARGE SCALE GENOMIC DNA]</scope>
    <source>
        <strain>ATCC 33530 / DSM 19775 / NCTC 10195 / G37</strain>
    </source>
</reference>
<accession>P47288</accession>